<evidence type="ECO:0000250" key="1"/>
<evidence type="ECO:0000255" key="2">
    <source>
        <dbReference type="HAMAP-Rule" id="MF_00963"/>
    </source>
</evidence>
<evidence type="ECO:0000256" key="3">
    <source>
        <dbReference type="SAM" id="MobiDB-lite"/>
    </source>
</evidence>
<evidence type="ECO:0000269" key="4">
    <source>
    </source>
</evidence>
<evidence type="ECO:0000269" key="5">
    <source>
    </source>
</evidence>
<evidence type="ECO:0000269" key="6">
    <source>
    </source>
</evidence>
<evidence type="ECO:0000269" key="7">
    <source>
    </source>
</evidence>
<evidence type="ECO:0000269" key="8">
    <source>
    </source>
</evidence>
<evidence type="ECO:0000269" key="9">
    <source>
    </source>
</evidence>
<evidence type="ECO:0007829" key="10">
    <source>
        <dbReference type="PDB" id="1KU3"/>
    </source>
</evidence>
<evidence type="ECO:0007829" key="11">
    <source>
        <dbReference type="PDB" id="1KU7"/>
    </source>
</evidence>
<evidence type="ECO:0007829" key="12">
    <source>
        <dbReference type="PDB" id="3UGO"/>
    </source>
</evidence>
<evidence type="ECO:0007829" key="13">
    <source>
        <dbReference type="PDB" id="5TJG"/>
    </source>
</evidence>
<organism>
    <name type="scientific">Thermus aquaticus</name>
    <dbReference type="NCBI Taxonomy" id="271"/>
    <lineage>
        <taxon>Bacteria</taxon>
        <taxon>Thermotogati</taxon>
        <taxon>Deinococcota</taxon>
        <taxon>Deinococci</taxon>
        <taxon>Thermales</taxon>
        <taxon>Thermaceae</taxon>
        <taxon>Thermus</taxon>
    </lineage>
</organism>
<accession>Q9EZJ8</accession>
<sequence>MKKSKSKKKAAKAQEVEVKEPVKEPEPLPELEAAEDLQDLPEPDPELLASEPELEDLADPLDLEGPLEADLLPEEGLLEEEEEELSLPKVSTSDPVRQYLHEIGQVPLLTLEEEIDLARKVEEGMEAIKKLSEATGLDQELIREVVRAKILGTARIQKIPGLKEKPDPKTVEEVDGKLKSLPKELKRYLHIAREGEAARQHLIEANLRLVVSIAKKYTGRGLSFLDLIQEGNQGLIRAVEKFEYKRRFKFSTYATWWIRQAINRAIADQARTIRIPVHMVETINKLSRTARQLQQELGREPSYEEIAEAMGPGWDAKRVEETLKIAQEPVSLETPIGDEKDSFYGDFIPDENLPSPVEAAAQSLLSEELEKALSKLSEREAMVLKLRKGLIDGREHTLEEVGAYFGVTRERIRQIENKALRKLKYHESRTRKLRDFLE</sequence>
<keyword id="KW-0002">3D-structure</keyword>
<keyword id="KW-0963">Cytoplasm</keyword>
<keyword id="KW-0903">Direct protein sequencing</keyword>
<keyword id="KW-0238">DNA-binding</keyword>
<keyword id="KW-0731">Sigma factor</keyword>
<keyword id="KW-0804">Transcription</keyword>
<keyword id="KW-0805">Transcription regulation</keyword>
<comment type="function">
    <text evidence="2 4 5">Sigma factors are initiation factors that promote the attachment of RNA polymerase to specific initiation sites and are then released. This sigma factor is the primary sigma factor during exponential growth.</text>
</comment>
<comment type="subunit">
    <text evidence="2 5 6 7 8 9">Interacts transiently with the RNA polymerase catalytic core formed by RpoA, RpoB, RpoC and RpoZ (2 alpha, 1 beta, 1 beta' and 1 omega subunit) to form the RNA polymerase holoenzyme that can initiate transcription.</text>
</comment>
<comment type="subcellular location">
    <subcellularLocation>
        <location evidence="2">Cytoplasm</location>
    </subcellularLocation>
</comment>
<comment type="domain">
    <text>Contains 4 domains, connected by flexible linkers. In the active conformation, the domains are in an extended conformation, each making extensive interactions with the RNA polymerase catalytic core (PubMed:11931761, PubMed:12016306).</text>
</comment>
<comment type="domain">
    <text evidence="1">In the autoinhibited state, sigma-70 factor domain-1 packs closely together with sigma-70 factor domains-2 and -4, contrary to the extended conformation that is seen when the protein is part of the RNA polymerase holoenzyme.</text>
</comment>
<comment type="domain">
    <text>The sigma-70 factor domain-2 mediates sequence-specific interaction with the -10 element in promoter DNA, and plays an important role in melting the double-stranded DNA and the formation of the transcription bubble. The sigma-70 factor domain-2 mediates interaction with the RNA polymerase subunits RpoB and RpoC (PubMed:11931761, PubMed:22136875).</text>
</comment>
<comment type="domain">
    <text evidence="5">The sigma-70 factor domain-4 contains a helix-turn-helix (H-T-H) motif that mediates interaction with the -35 element in promoter DNA. The domain also mediates interaction with the RNA polymerase subunit RpoA. Interactions between sigma-70 factor domain-4 and anti-sigma factors prevents interaction of sigma factors with the RNA polymerase catalytic core (PubMed:11931761).</text>
</comment>
<comment type="similarity">
    <text evidence="2">Belongs to the sigma-70 factor family. RpoD/SigA subfamily.</text>
</comment>
<dbReference type="EMBL" id="AF291720">
    <property type="protein sequence ID" value="AAG36964.1"/>
    <property type="molecule type" value="Genomic_DNA"/>
</dbReference>
<dbReference type="PDB" id="1KU2">
    <property type="method" value="X-ray"/>
    <property type="resolution" value="2.90 A"/>
    <property type="chains" value="A/B=92-332"/>
</dbReference>
<dbReference type="PDB" id="1KU3">
    <property type="method" value="X-ray"/>
    <property type="resolution" value="1.80 A"/>
    <property type="chains" value="A=366-438"/>
</dbReference>
<dbReference type="PDB" id="1KU7">
    <property type="method" value="X-ray"/>
    <property type="resolution" value="2.40 A"/>
    <property type="chains" value="A/D=366-438"/>
</dbReference>
<dbReference type="PDB" id="1L9U">
    <property type="method" value="X-ray"/>
    <property type="resolution" value="4.00 A"/>
    <property type="chains" value="H/Q=92-438"/>
</dbReference>
<dbReference type="PDB" id="1L9Z">
    <property type="method" value="X-ray"/>
    <property type="resolution" value="6.50 A"/>
    <property type="chains" value="H=1-438"/>
</dbReference>
<dbReference type="PDB" id="1RIO">
    <property type="method" value="X-ray"/>
    <property type="resolution" value="2.30 A"/>
    <property type="chains" value="H=366-438"/>
</dbReference>
<dbReference type="PDB" id="3LES">
    <property type="method" value="X-ray"/>
    <property type="resolution" value="2.77 A"/>
    <property type="chains" value="A/B=93-271"/>
</dbReference>
<dbReference type="PDB" id="3LEV">
    <property type="method" value="X-ray"/>
    <property type="resolution" value="2.50 A"/>
    <property type="chains" value="A=93-271"/>
</dbReference>
<dbReference type="PDB" id="3N97">
    <property type="method" value="X-ray"/>
    <property type="resolution" value="3.25 A"/>
    <property type="chains" value="A/D=366-438"/>
</dbReference>
<dbReference type="PDB" id="3UGO">
    <property type="method" value="X-ray"/>
    <property type="resolution" value="2.10 A"/>
    <property type="chains" value="A=92-332"/>
</dbReference>
<dbReference type="PDB" id="3UGP">
    <property type="method" value="X-ray"/>
    <property type="resolution" value="2.70 A"/>
    <property type="chains" value="A=92-332"/>
</dbReference>
<dbReference type="PDB" id="4KI2">
    <property type="method" value="X-ray"/>
    <property type="resolution" value="3.61 A"/>
    <property type="chains" value="A/B=92-332"/>
</dbReference>
<dbReference type="PDB" id="4XLN">
    <property type="method" value="X-ray"/>
    <property type="resolution" value="4.00 A"/>
    <property type="chains" value="F/L=92-438"/>
</dbReference>
<dbReference type="PDB" id="4XLP">
    <property type="method" value="X-ray"/>
    <property type="resolution" value="4.00 A"/>
    <property type="chains" value="F/L=92-438"/>
</dbReference>
<dbReference type="PDB" id="4XLQ">
    <property type="method" value="X-ray"/>
    <property type="resolution" value="4.60 A"/>
    <property type="chains" value="F/L=92-438"/>
</dbReference>
<dbReference type="PDB" id="4XLR">
    <property type="method" value="X-ray"/>
    <property type="resolution" value="4.30 A"/>
    <property type="chains" value="F/L=92-438"/>
</dbReference>
<dbReference type="PDB" id="4XLS">
    <property type="method" value="X-ray"/>
    <property type="resolution" value="4.01 A"/>
    <property type="chains" value="F/L=92-438"/>
</dbReference>
<dbReference type="PDB" id="5TJG">
    <property type="method" value="X-ray"/>
    <property type="resolution" value="2.60 A"/>
    <property type="chains" value="F=92-438"/>
</dbReference>
<dbReference type="PDBsum" id="1KU2"/>
<dbReference type="PDBsum" id="1KU3"/>
<dbReference type="PDBsum" id="1KU7"/>
<dbReference type="PDBsum" id="1L9U"/>
<dbReference type="PDBsum" id="1L9Z"/>
<dbReference type="PDBsum" id="1RIO"/>
<dbReference type="PDBsum" id="3LES"/>
<dbReference type="PDBsum" id="3LEV"/>
<dbReference type="PDBsum" id="3N97"/>
<dbReference type="PDBsum" id="3UGO"/>
<dbReference type="PDBsum" id="3UGP"/>
<dbReference type="PDBsum" id="4KI2"/>
<dbReference type="PDBsum" id="4XLN"/>
<dbReference type="PDBsum" id="4XLP"/>
<dbReference type="PDBsum" id="4XLQ"/>
<dbReference type="PDBsum" id="4XLR"/>
<dbReference type="PDBsum" id="4XLS"/>
<dbReference type="PDBsum" id="5TJG"/>
<dbReference type="SMR" id="Q9EZJ8"/>
<dbReference type="DIP" id="DIP-49014N"/>
<dbReference type="IntAct" id="Q9EZJ8">
    <property type="interactions" value="1"/>
</dbReference>
<dbReference type="EvolutionaryTrace" id="Q9EZJ8"/>
<dbReference type="GO" id="GO:0005737">
    <property type="term" value="C:cytoplasm"/>
    <property type="evidence" value="ECO:0007669"/>
    <property type="project" value="UniProtKB-SubCell"/>
</dbReference>
<dbReference type="GO" id="GO:0003677">
    <property type="term" value="F:DNA binding"/>
    <property type="evidence" value="ECO:0007669"/>
    <property type="project" value="UniProtKB-UniRule"/>
</dbReference>
<dbReference type="GO" id="GO:0016987">
    <property type="term" value="F:sigma factor activity"/>
    <property type="evidence" value="ECO:0000314"/>
    <property type="project" value="CACAO"/>
</dbReference>
<dbReference type="GO" id="GO:0006352">
    <property type="term" value="P:DNA-templated transcription initiation"/>
    <property type="evidence" value="ECO:0007669"/>
    <property type="project" value="UniProtKB-UniRule"/>
</dbReference>
<dbReference type="CDD" id="cd06171">
    <property type="entry name" value="Sigma70_r4"/>
    <property type="match status" value="1"/>
</dbReference>
<dbReference type="FunFam" id="1.10.601.10:FF:000001">
    <property type="entry name" value="RNA polymerase sigma factor SigA"/>
    <property type="match status" value="1"/>
</dbReference>
<dbReference type="Gene3D" id="1.20.120.1810">
    <property type="match status" value="1"/>
</dbReference>
<dbReference type="Gene3D" id="1.10.10.10">
    <property type="entry name" value="Winged helix-like DNA-binding domain superfamily/Winged helix DNA-binding domain"/>
    <property type="match status" value="2"/>
</dbReference>
<dbReference type="HAMAP" id="MF_00963">
    <property type="entry name" value="Sigma70_RpoD_SigA"/>
    <property type="match status" value="1"/>
</dbReference>
<dbReference type="InterPro" id="IPR014284">
    <property type="entry name" value="RNA_pol_sigma-70_dom"/>
</dbReference>
<dbReference type="InterPro" id="IPR000943">
    <property type="entry name" value="RNA_pol_sigma70"/>
</dbReference>
<dbReference type="InterPro" id="IPR009042">
    <property type="entry name" value="RNA_pol_sigma70_r1_2"/>
</dbReference>
<dbReference type="InterPro" id="IPR007627">
    <property type="entry name" value="RNA_pol_sigma70_r2"/>
</dbReference>
<dbReference type="InterPro" id="IPR007624">
    <property type="entry name" value="RNA_pol_sigma70_r3"/>
</dbReference>
<dbReference type="InterPro" id="IPR007630">
    <property type="entry name" value="RNA_pol_sigma70_r4"/>
</dbReference>
<dbReference type="InterPro" id="IPR013325">
    <property type="entry name" value="RNA_pol_sigma_r2"/>
</dbReference>
<dbReference type="InterPro" id="IPR013324">
    <property type="entry name" value="RNA_pol_sigma_r3/r4-like"/>
</dbReference>
<dbReference type="InterPro" id="IPR012760">
    <property type="entry name" value="RNA_pol_sigma_RpoD_C"/>
</dbReference>
<dbReference type="InterPro" id="IPR050239">
    <property type="entry name" value="Sigma-70_RNA_pol_init_factors"/>
</dbReference>
<dbReference type="InterPro" id="IPR028630">
    <property type="entry name" value="Sigma70_RpoD"/>
</dbReference>
<dbReference type="InterPro" id="IPR036388">
    <property type="entry name" value="WH-like_DNA-bd_sf"/>
</dbReference>
<dbReference type="NCBIfam" id="TIGR02393">
    <property type="entry name" value="RpoD_Cterm"/>
    <property type="match status" value="1"/>
</dbReference>
<dbReference type="NCBIfam" id="TIGR02937">
    <property type="entry name" value="sigma70-ECF"/>
    <property type="match status" value="1"/>
</dbReference>
<dbReference type="PANTHER" id="PTHR30603">
    <property type="entry name" value="RNA POLYMERASE SIGMA FACTOR RPO"/>
    <property type="match status" value="1"/>
</dbReference>
<dbReference type="PANTHER" id="PTHR30603:SF60">
    <property type="entry name" value="RNA POLYMERASE SIGMA FACTOR RPOD"/>
    <property type="match status" value="1"/>
</dbReference>
<dbReference type="Pfam" id="PF00140">
    <property type="entry name" value="Sigma70_r1_2"/>
    <property type="match status" value="1"/>
</dbReference>
<dbReference type="Pfam" id="PF04542">
    <property type="entry name" value="Sigma70_r2"/>
    <property type="match status" value="1"/>
</dbReference>
<dbReference type="Pfam" id="PF04539">
    <property type="entry name" value="Sigma70_r3"/>
    <property type="match status" value="1"/>
</dbReference>
<dbReference type="Pfam" id="PF04545">
    <property type="entry name" value="Sigma70_r4"/>
    <property type="match status" value="1"/>
</dbReference>
<dbReference type="PRINTS" id="PR00046">
    <property type="entry name" value="SIGMA70FCT"/>
</dbReference>
<dbReference type="SUPFAM" id="SSF88946">
    <property type="entry name" value="Sigma2 domain of RNA polymerase sigma factors"/>
    <property type="match status" value="1"/>
</dbReference>
<dbReference type="SUPFAM" id="SSF88659">
    <property type="entry name" value="Sigma3 and sigma4 domains of RNA polymerase sigma factors"/>
    <property type="match status" value="2"/>
</dbReference>
<dbReference type="PROSITE" id="PS00716">
    <property type="entry name" value="SIGMA70_2"/>
    <property type="match status" value="1"/>
</dbReference>
<reference key="1">
    <citation type="journal article" date="2001" name="J. Bacteriol.">
        <title>Recombinant Thermus aquaticus RNA polymerase, a new tool for structure-based analysis of transcription.</title>
        <authorList>
            <person name="Minakhin L."/>
            <person name="Nechaev S."/>
            <person name="Campbell E.A."/>
            <person name="Severinov K."/>
        </authorList>
    </citation>
    <scope>NUCLEOTIDE SEQUENCE [GENOMIC DNA]</scope>
    <scope>FUNCTION</scope>
</reference>
<reference key="2">
    <citation type="journal article" date="2002" name="Mol. Cell">
        <title>Structure of the bacterial RNA polymerase promoter specificity sigma subunit.</title>
        <authorList>
            <person name="Campbell E.A."/>
            <person name="Muzzin O."/>
            <person name="Chlenov M."/>
            <person name="Sun J.L."/>
            <person name="Olson C.A."/>
            <person name="Weinman O."/>
            <person name="Trester-Zedlitz M.L."/>
            <person name="Darst S.A."/>
        </authorList>
    </citation>
    <scope>X-RAY CRYSTALLOGRAPHY (1.80 ANGSTROMS) OF 366-438 IN COMPLEX WITH PROMOTER DNA</scope>
    <scope>PARTIAL PROTEIN SEQUENCE</scope>
    <scope>FUNCTION</scope>
    <scope>DOMAIN</scope>
    <scope>DNA-BINDING</scope>
    <scope>IDENTIFICATION BY MASS SPECTROMETRY</scope>
</reference>
<reference key="3">
    <citation type="journal article" date="2002" name="Science">
        <title>Structural basis of transcription initiation: RNA polymerase holoenzyme at 4 A resolution.</title>
        <authorList>
            <person name="Murakami K.S."/>
            <person name="Masuda S."/>
            <person name="Darst S.A."/>
        </authorList>
    </citation>
    <scope>X-RAY CRYSTALLOGRAPHY (4.00 ANGSTROMS) OF 92-438 IN COMPLEX WITH RPOA; RPOB; RPOC AND RPOZ</scope>
    <scope>DOMAIN</scope>
    <scope>DNA-BINDING</scope>
    <scope>SUBUNIT</scope>
</reference>
<reference key="4">
    <citation type="journal article" date="2002" name="Science">
        <title>Structural basis of transcription initiation: an RNA polymerase holoenzyme-DNA complex.</title>
        <authorList>
            <person name="Murakami K.S."/>
            <person name="Masuda S."/>
            <person name="Campbell E.A."/>
            <person name="Muzzin O."/>
            <person name="Darst S.A."/>
        </authorList>
    </citation>
    <scope>X-RAY CRYSTALLOGRAPHY (6.50 ANGSTROMS)IN COMPLEX WITH DNA; RPOA; RPOB; RPOC AND RPOZ</scope>
    <scope>DNA-BINDING</scope>
    <scope>SUBUNIT</scope>
</reference>
<reference key="5">
    <citation type="journal article" date="2004" name="Mol. Cell">
        <title>Structure of a ternary transcription activation complex.</title>
        <authorList>
            <person name="Jain D."/>
            <person name="Nickels B.E."/>
            <person name="Sun L."/>
            <person name="Hochschild A."/>
            <person name="Darst S.A."/>
        </authorList>
    </citation>
    <scope>X-RAY CRYSTALLOGRAPHY (2.30 ANGSTROMS) OF 366-438 IN COMPLEX WITH PROMOTER DNA</scope>
    <scope>DNA-BINDING</scope>
</reference>
<reference key="6">
    <citation type="journal article" date="2011" name="Cell">
        <title>Structural basis for promoter-10 element recognition by the bacterial RNA polymerase sigma subunit.</title>
        <authorList>
            <person name="Feklistov A."/>
            <person name="Darst S.A."/>
        </authorList>
    </citation>
    <scope>X-RAY CRYSTALLOGRAPHY (2.10 ANGSTROMS) OF 92-332 IN COMPLEX WITH PROMOTER DNA</scope>
    <scope>DOMAIN</scope>
    <scope>DNA-BINDING</scope>
</reference>
<feature type="chain" id="PRO_0000423011" description="RNA polymerase sigma factor SigA">
    <location>
        <begin position="1"/>
        <end position="438"/>
    </location>
</feature>
<feature type="DNA-binding region" description="H-T-H motif" evidence="2">
    <location>
        <begin position="398"/>
        <end position="417"/>
    </location>
</feature>
<feature type="region of interest" description="Disordered" evidence="3">
    <location>
        <begin position="1"/>
        <end position="69"/>
    </location>
</feature>
<feature type="region of interest" description="Sigma-70 factor domain-1">
    <location>
        <begin position="93"/>
        <end position="128"/>
    </location>
</feature>
<feature type="region of interest" description="Sigma-70 factor domain-2">
    <location>
        <begin position="202"/>
        <end position="272"/>
    </location>
</feature>
<feature type="region of interest" description="Sigma-70 factor domain-3">
    <location>
        <begin position="281"/>
        <end position="359"/>
    </location>
</feature>
<feature type="region of interest" description="Sigma-70 factor domain-4">
    <location>
        <begin position="372"/>
        <end position="424"/>
    </location>
</feature>
<feature type="short sequence motif" description="Interaction with polymerase core subunit RpoC">
    <location>
        <begin position="226"/>
        <end position="229"/>
    </location>
</feature>
<feature type="compositionally biased region" description="Basic residues" evidence="3">
    <location>
        <begin position="1"/>
        <end position="11"/>
    </location>
</feature>
<feature type="compositionally biased region" description="Basic and acidic residues" evidence="3">
    <location>
        <begin position="12"/>
        <end position="26"/>
    </location>
</feature>
<feature type="compositionally biased region" description="Acidic residues" evidence="3">
    <location>
        <begin position="27"/>
        <end position="45"/>
    </location>
</feature>
<feature type="compositionally biased region" description="Acidic residues" evidence="3">
    <location>
        <begin position="52"/>
        <end position="69"/>
    </location>
</feature>
<feature type="helix" evidence="12">
    <location>
        <begin position="94"/>
        <end position="103"/>
    </location>
</feature>
<feature type="helix" evidence="12">
    <location>
        <begin position="111"/>
        <end position="135"/>
    </location>
</feature>
<feature type="helix" evidence="12">
    <location>
        <begin position="139"/>
        <end position="148"/>
    </location>
</feature>
<feature type="helix" evidence="12">
    <location>
        <begin position="151"/>
        <end position="153"/>
    </location>
</feature>
<feature type="helix" evidence="12">
    <location>
        <begin position="168"/>
        <end position="179"/>
    </location>
</feature>
<feature type="helix" evidence="12">
    <location>
        <begin position="183"/>
        <end position="204"/>
    </location>
</feature>
<feature type="helix" evidence="12">
    <location>
        <begin position="207"/>
        <end position="214"/>
    </location>
</feature>
<feature type="helix" evidence="12">
    <location>
        <begin position="215"/>
        <end position="217"/>
    </location>
</feature>
<feature type="strand" evidence="12">
    <location>
        <begin position="220"/>
        <end position="222"/>
    </location>
</feature>
<feature type="helix" evidence="12">
    <location>
        <begin position="224"/>
        <end position="241"/>
    </location>
</feature>
<feature type="helix" evidence="12">
    <location>
        <begin position="244"/>
        <end position="246"/>
    </location>
</feature>
<feature type="helix" evidence="12">
    <location>
        <begin position="250"/>
        <end position="269"/>
    </location>
</feature>
<feature type="helix" evidence="13">
    <location>
        <begin position="277"/>
        <end position="297"/>
    </location>
</feature>
<feature type="helix" evidence="13">
    <location>
        <begin position="303"/>
        <end position="310"/>
    </location>
</feature>
<feature type="helix" evidence="13">
    <location>
        <begin position="316"/>
        <end position="326"/>
    </location>
</feature>
<feature type="helix" evidence="13">
    <location>
        <begin position="344"/>
        <end position="346"/>
    </location>
</feature>
<feature type="strand" evidence="13">
    <location>
        <begin position="351"/>
        <end position="353"/>
    </location>
</feature>
<feature type="strand" evidence="10">
    <location>
        <begin position="370"/>
        <end position="372"/>
    </location>
</feature>
<feature type="turn" evidence="10">
    <location>
        <begin position="373"/>
        <end position="375"/>
    </location>
</feature>
<feature type="helix" evidence="10">
    <location>
        <begin position="378"/>
        <end position="387"/>
    </location>
</feature>
<feature type="turn" evidence="10">
    <location>
        <begin position="388"/>
        <end position="392"/>
    </location>
</feature>
<feature type="helix" evidence="10">
    <location>
        <begin position="398"/>
        <end position="405"/>
    </location>
</feature>
<feature type="helix" evidence="10">
    <location>
        <begin position="409"/>
        <end position="425"/>
    </location>
</feature>
<feature type="helix" evidence="11">
    <location>
        <begin position="434"/>
        <end position="437"/>
    </location>
</feature>
<proteinExistence type="evidence at protein level"/>
<protein>
    <recommendedName>
        <fullName evidence="2">RNA polymerase sigma factor SigA</fullName>
    </recommendedName>
</protein>
<name>SIGA_THEAQ</name>
<gene>
    <name evidence="2" type="primary">sigA</name>
</gene>